<reference key="1">
    <citation type="submission" date="2007-11" db="EMBL/GenBank/DDBJ databases">
        <authorList>
            <consortium name="The Salmonella enterica serovar Arizonae Genome Sequencing Project"/>
            <person name="McClelland M."/>
            <person name="Sanderson E.K."/>
            <person name="Porwollik S."/>
            <person name="Spieth J."/>
            <person name="Clifton W.S."/>
            <person name="Fulton R."/>
            <person name="Chunyan W."/>
            <person name="Wollam A."/>
            <person name="Shah N."/>
            <person name="Pepin K."/>
            <person name="Bhonagiri V."/>
            <person name="Nash W."/>
            <person name="Johnson M."/>
            <person name="Thiruvilangam P."/>
            <person name="Wilson R."/>
        </authorList>
    </citation>
    <scope>NUCLEOTIDE SEQUENCE [LARGE SCALE GENOMIC DNA]</scope>
    <source>
        <strain>ATCC BAA-731 / CDC346-86 / RSK2980</strain>
    </source>
</reference>
<dbReference type="EC" id="6.3.2.8" evidence="1"/>
<dbReference type="EMBL" id="CP000880">
    <property type="protein sequence ID" value="ABX22719.1"/>
    <property type="molecule type" value="Genomic_DNA"/>
</dbReference>
<dbReference type="SMR" id="A9MQC1"/>
<dbReference type="STRING" id="41514.SARI_02872"/>
<dbReference type="KEGG" id="ses:SARI_02872"/>
<dbReference type="HOGENOM" id="CLU_028104_2_2_6"/>
<dbReference type="UniPathway" id="UPA00219"/>
<dbReference type="Proteomes" id="UP000002084">
    <property type="component" value="Chromosome"/>
</dbReference>
<dbReference type="GO" id="GO:0005737">
    <property type="term" value="C:cytoplasm"/>
    <property type="evidence" value="ECO:0007669"/>
    <property type="project" value="UniProtKB-SubCell"/>
</dbReference>
<dbReference type="GO" id="GO:0005524">
    <property type="term" value="F:ATP binding"/>
    <property type="evidence" value="ECO:0007669"/>
    <property type="project" value="UniProtKB-UniRule"/>
</dbReference>
<dbReference type="GO" id="GO:0008763">
    <property type="term" value="F:UDP-N-acetylmuramate-L-alanine ligase activity"/>
    <property type="evidence" value="ECO:0007669"/>
    <property type="project" value="UniProtKB-UniRule"/>
</dbReference>
<dbReference type="GO" id="GO:0051301">
    <property type="term" value="P:cell division"/>
    <property type="evidence" value="ECO:0007669"/>
    <property type="project" value="UniProtKB-KW"/>
</dbReference>
<dbReference type="GO" id="GO:0071555">
    <property type="term" value="P:cell wall organization"/>
    <property type="evidence" value="ECO:0007669"/>
    <property type="project" value="UniProtKB-KW"/>
</dbReference>
<dbReference type="GO" id="GO:0009252">
    <property type="term" value="P:peptidoglycan biosynthetic process"/>
    <property type="evidence" value="ECO:0007669"/>
    <property type="project" value="UniProtKB-UniRule"/>
</dbReference>
<dbReference type="GO" id="GO:0008360">
    <property type="term" value="P:regulation of cell shape"/>
    <property type="evidence" value="ECO:0007669"/>
    <property type="project" value="UniProtKB-KW"/>
</dbReference>
<dbReference type="FunFam" id="3.40.1190.10:FF:000001">
    <property type="entry name" value="UDP-N-acetylmuramate--L-alanine ligase"/>
    <property type="match status" value="1"/>
</dbReference>
<dbReference type="FunFam" id="3.40.50.720:FF:000046">
    <property type="entry name" value="UDP-N-acetylmuramate--L-alanine ligase"/>
    <property type="match status" value="1"/>
</dbReference>
<dbReference type="FunFam" id="3.90.190.20:FF:000001">
    <property type="entry name" value="UDP-N-acetylmuramate--L-alanine ligase"/>
    <property type="match status" value="1"/>
</dbReference>
<dbReference type="Gene3D" id="3.90.190.20">
    <property type="entry name" value="Mur ligase, C-terminal domain"/>
    <property type="match status" value="1"/>
</dbReference>
<dbReference type="Gene3D" id="3.40.1190.10">
    <property type="entry name" value="Mur-like, catalytic domain"/>
    <property type="match status" value="1"/>
</dbReference>
<dbReference type="Gene3D" id="3.40.50.720">
    <property type="entry name" value="NAD(P)-binding Rossmann-like Domain"/>
    <property type="match status" value="1"/>
</dbReference>
<dbReference type="HAMAP" id="MF_00046">
    <property type="entry name" value="MurC"/>
    <property type="match status" value="1"/>
</dbReference>
<dbReference type="InterPro" id="IPR036565">
    <property type="entry name" value="Mur-like_cat_sf"/>
</dbReference>
<dbReference type="InterPro" id="IPR004101">
    <property type="entry name" value="Mur_ligase_C"/>
</dbReference>
<dbReference type="InterPro" id="IPR036615">
    <property type="entry name" value="Mur_ligase_C_dom_sf"/>
</dbReference>
<dbReference type="InterPro" id="IPR013221">
    <property type="entry name" value="Mur_ligase_cen"/>
</dbReference>
<dbReference type="InterPro" id="IPR000713">
    <property type="entry name" value="Mur_ligase_N"/>
</dbReference>
<dbReference type="InterPro" id="IPR050061">
    <property type="entry name" value="MurCDEF_pg_biosynth"/>
</dbReference>
<dbReference type="InterPro" id="IPR005758">
    <property type="entry name" value="UDP-N-AcMur_Ala_ligase_MurC"/>
</dbReference>
<dbReference type="NCBIfam" id="TIGR01082">
    <property type="entry name" value="murC"/>
    <property type="match status" value="1"/>
</dbReference>
<dbReference type="PANTHER" id="PTHR43445:SF3">
    <property type="entry name" value="UDP-N-ACETYLMURAMATE--L-ALANINE LIGASE"/>
    <property type="match status" value="1"/>
</dbReference>
<dbReference type="PANTHER" id="PTHR43445">
    <property type="entry name" value="UDP-N-ACETYLMURAMATE--L-ALANINE LIGASE-RELATED"/>
    <property type="match status" value="1"/>
</dbReference>
<dbReference type="Pfam" id="PF01225">
    <property type="entry name" value="Mur_ligase"/>
    <property type="match status" value="1"/>
</dbReference>
<dbReference type="Pfam" id="PF02875">
    <property type="entry name" value="Mur_ligase_C"/>
    <property type="match status" value="1"/>
</dbReference>
<dbReference type="Pfam" id="PF08245">
    <property type="entry name" value="Mur_ligase_M"/>
    <property type="match status" value="1"/>
</dbReference>
<dbReference type="SUPFAM" id="SSF51984">
    <property type="entry name" value="MurCD N-terminal domain"/>
    <property type="match status" value="1"/>
</dbReference>
<dbReference type="SUPFAM" id="SSF53623">
    <property type="entry name" value="MurD-like peptide ligases, catalytic domain"/>
    <property type="match status" value="1"/>
</dbReference>
<dbReference type="SUPFAM" id="SSF53244">
    <property type="entry name" value="MurD-like peptide ligases, peptide-binding domain"/>
    <property type="match status" value="1"/>
</dbReference>
<comment type="function">
    <text evidence="1">Cell wall formation.</text>
</comment>
<comment type="catalytic activity">
    <reaction evidence="1">
        <text>UDP-N-acetyl-alpha-D-muramate + L-alanine + ATP = UDP-N-acetyl-alpha-D-muramoyl-L-alanine + ADP + phosphate + H(+)</text>
        <dbReference type="Rhea" id="RHEA:23372"/>
        <dbReference type="ChEBI" id="CHEBI:15378"/>
        <dbReference type="ChEBI" id="CHEBI:30616"/>
        <dbReference type="ChEBI" id="CHEBI:43474"/>
        <dbReference type="ChEBI" id="CHEBI:57972"/>
        <dbReference type="ChEBI" id="CHEBI:70757"/>
        <dbReference type="ChEBI" id="CHEBI:83898"/>
        <dbReference type="ChEBI" id="CHEBI:456216"/>
        <dbReference type="EC" id="6.3.2.8"/>
    </reaction>
</comment>
<comment type="pathway">
    <text evidence="1">Cell wall biogenesis; peptidoglycan biosynthesis.</text>
</comment>
<comment type="subcellular location">
    <subcellularLocation>
        <location evidence="1">Cytoplasm</location>
    </subcellularLocation>
</comment>
<comment type="similarity">
    <text evidence="1">Belongs to the MurCDEF family.</text>
</comment>
<proteinExistence type="inferred from homology"/>
<feature type="chain" id="PRO_1000074751" description="UDP-N-acetylmuramate--L-alanine ligase">
    <location>
        <begin position="1"/>
        <end position="491"/>
    </location>
</feature>
<feature type="binding site" evidence="1">
    <location>
        <begin position="126"/>
        <end position="132"/>
    </location>
    <ligand>
        <name>ATP</name>
        <dbReference type="ChEBI" id="CHEBI:30616"/>
    </ligand>
</feature>
<organism>
    <name type="scientific">Salmonella arizonae (strain ATCC BAA-731 / CDC346-86 / RSK2980)</name>
    <dbReference type="NCBI Taxonomy" id="41514"/>
    <lineage>
        <taxon>Bacteria</taxon>
        <taxon>Pseudomonadati</taxon>
        <taxon>Pseudomonadota</taxon>
        <taxon>Gammaproteobacteria</taxon>
        <taxon>Enterobacterales</taxon>
        <taxon>Enterobacteriaceae</taxon>
        <taxon>Salmonella</taxon>
    </lineage>
</organism>
<gene>
    <name evidence="1" type="primary">murC</name>
    <name type="ordered locus">SARI_02872</name>
</gene>
<protein>
    <recommendedName>
        <fullName evidence="1">UDP-N-acetylmuramate--L-alanine ligase</fullName>
        <ecNumber evidence="1">6.3.2.8</ecNumber>
    </recommendedName>
    <alternativeName>
        <fullName evidence="1">UDP-N-acetylmuramoyl-L-alanine synthetase</fullName>
    </alternativeName>
</protein>
<evidence type="ECO:0000255" key="1">
    <source>
        <dbReference type="HAMAP-Rule" id="MF_00046"/>
    </source>
</evidence>
<keyword id="KW-0067">ATP-binding</keyword>
<keyword id="KW-0131">Cell cycle</keyword>
<keyword id="KW-0132">Cell division</keyword>
<keyword id="KW-0133">Cell shape</keyword>
<keyword id="KW-0961">Cell wall biogenesis/degradation</keyword>
<keyword id="KW-0963">Cytoplasm</keyword>
<keyword id="KW-0436">Ligase</keyword>
<keyword id="KW-0547">Nucleotide-binding</keyword>
<keyword id="KW-0573">Peptidoglycan synthesis</keyword>
<keyword id="KW-1185">Reference proteome</keyword>
<name>MURC_SALAR</name>
<accession>A9MQC1</accession>
<sequence length="491" mass="53547">MNTQQLAKLRSIVPEMRRVRHIHFVGIGGAGMGGIAEVLANEGYQISGSDLAPNPVTQQLTSLGATIFFNHRPENVRDASVVVVSSAISADNPEIVAAHEARIPVIRRAEMLAELMRFRHGIAIAGTHGKTTTTAMVSSIYAEAGLDPTFVNGGLVKAAGVHARLGHSRYLIAEADESDASFLHLQPMVAIVTNIEADHMDTYHGDFENLKQTFINFLHNLPFYGRAVMCVDDPVIRELLPRVGRQTTTYGFSDDADVRVEDYQQIGPQGHFTLLRQGMPDLRVTLNAPGRHNALNATAAVAVATEEGIDDDAILRALESFQGTGRRFDFLGEFPLEPVNGKSGTAMLVDDYGHHPTEVDATIKAARAGWPDKNLVMLFQPHRYTRTRDLYDDFANVLTQVDALLMLDVYPAGETPIPGADSRSLCRTIRNRGKIDPILVSDPAQIATILAPVLTGNDLILVQGAGNVGKIARYLSEIKLKPQTQEEEQHG</sequence>